<accession>A2S9Y0</accession>
<name>RL32_BURM9</name>
<sequence length="59" mass="6683">MAVQQNKKSPSKRGMHRSHDFLTTSPLAVEPSTGEVHLRHHISPNGYYRGKKVVKTKND</sequence>
<proteinExistence type="inferred from homology"/>
<keyword id="KW-0687">Ribonucleoprotein</keyword>
<keyword id="KW-0689">Ribosomal protein</keyword>
<reference key="1">
    <citation type="journal article" date="2010" name="Genome Biol. Evol.">
        <title>Continuing evolution of Burkholderia mallei through genome reduction and large-scale rearrangements.</title>
        <authorList>
            <person name="Losada L."/>
            <person name="Ronning C.M."/>
            <person name="DeShazer D."/>
            <person name="Woods D."/>
            <person name="Fedorova N."/>
            <person name="Kim H.S."/>
            <person name="Shabalina S.A."/>
            <person name="Pearson T.R."/>
            <person name="Brinkac L."/>
            <person name="Tan P."/>
            <person name="Nandi T."/>
            <person name="Crabtree J."/>
            <person name="Badger J."/>
            <person name="Beckstrom-Sternberg S."/>
            <person name="Saqib M."/>
            <person name="Schutzer S.E."/>
            <person name="Keim P."/>
            <person name="Nierman W.C."/>
        </authorList>
    </citation>
    <scope>NUCLEOTIDE SEQUENCE [LARGE SCALE GENOMIC DNA]</scope>
    <source>
        <strain>NCTC 10229</strain>
    </source>
</reference>
<comment type="similarity">
    <text evidence="1">Belongs to the bacterial ribosomal protein bL32 family.</text>
</comment>
<organism>
    <name type="scientific">Burkholderia mallei (strain NCTC 10229)</name>
    <dbReference type="NCBI Taxonomy" id="412022"/>
    <lineage>
        <taxon>Bacteria</taxon>
        <taxon>Pseudomonadati</taxon>
        <taxon>Pseudomonadota</taxon>
        <taxon>Betaproteobacteria</taxon>
        <taxon>Burkholderiales</taxon>
        <taxon>Burkholderiaceae</taxon>
        <taxon>Burkholderia</taxon>
        <taxon>pseudomallei group</taxon>
    </lineage>
</organism>
<protein>
    <recommendedName>
        <fullName evidence="1">Large ribosomal subunit protein bL32</fullName>
    </recommendedName>
    <alternativeName>
        <fullName evidence="3">50S ribosomal protein L32</fullName>
    </alternativeName>
</protein>
<evidence type="ECO:0000255" key="1">
    <source>
        <dbReference type="HAMAP-Rule" id="MF_00340"/>
    </source>
</evidence>
<evidence type="ECO:0000256" key="2">
    <source>
        <dbReference type="SAM" id="MobiDB-lite"/>
    </source>
</evidence>
<evidence type="ECO:0000305" key="3"/>
<gene>
    <name evidence="1" type="primary">rpmF</name>
    <name type="ordered locus">BMA10229_A2800</name>
</gene>
<feature type="chain" id="PRO_1000005048" description="Large ribosomal subunit protein bL32">
    <location>
        <begin position="1"/>
        <end position="59"/>
    </location>
</feature>
<feature type="region of interest" description="Disordered" evidence="2">
    <location>
        <begin position="1"/>
        <end position="59"/>
    </location>
</feature>
<feature type="compositionally biased region" description="Basic residues" evidence="2">
    <location>
        <begin position="49"/>
        <end position="59"/>
    </location>
</feature>
<dbReference type="EMBL" id="CP000546">
    <property type="protein sequence ID" value="ABN00707.1"/>
    <property type="molecule type" value="Genomic_DNA"/>
</dbReference>
<dbReference type="RefSeq" id="WP_004192741.1">
    <property type="nucleotide sequence ID" value="NC_008836.1"/>
</dbReference>
<dbReference type="SMR" id="A2S9Y0"/>
<dbReference type="GeneID" id="93061024"/>
<dbReference type="KEGG" id="bml:BMA10229_A2800"/>
<dbReference type="HOGENOM" id="CLU_129084_2_1_4"/>
<dbReference type="Proteomes" id="UP000002283">
    <property type="component" value="Chromosome I"/>
</dbReference>
<dbReference type="GO" id="GO:0015934">
    <property type="term" value="C:large ribosomal subunit"/>
    <property type="evidence" value="ECO:0007669"/>
    <property type="project" value="InterPro"/>
</dbReference>
<dbReference type="GO" id="GO:0003735">
    <property type="term" value="F:structural constituent of ribosome"/>
    <property type="evidence" value="ECO:0007669"/>
    <property type="project" value="InterPro"/>
</dbReference>
<dbReference type="GO" id="GO:0006412">
    <property type="term" value="P:translation"/>
    <property type="evidence" value="ECO:0007669"/>
    <property type="project" value="UniProtKB-UniRule"/>
</dbReference>
<dbReference type="HAMAP" id="MF_00340">
    <property type="entry name" value="Ribosomal_bL32"/>
    <property type="match status" value="1"/>
</dbReference>
<dbReference type="InterPro" id="IPR002677">
    <property type="entry name" value="Ribosomal_bL32"/>
</dbReference>
<dbReference type="InterPro" id="IPR044957">
    <property type="entry name" value="Ribosomal_bL32_bact"/>
</dbReference>
<dbReference type="InterPro" id="IPR011332">
    <property type="entry name" value="Ribosomal_zn-bd"/>
</dbReference>
<dbReference type="NCBIfam" id="TIGR01031">
    <property type="entry name" value="rpmF_bact"/>
    <property type="match status" value="1"/>
</dbReference>
<dbReference type="PANTHER" id="PTHR35534">
    <property type="entry name" value="50S RIBOSOMAL PROTEIN L32"/>
    <property type="match status" value="1"/>
</dbReference>
<dbReference type="PANTHER" id="PTHR35534:SF1">
    <property type="entry name" value="LARGE RIBOSOMAL SUBUNIT PROTEIN BL32"/>
    <property type="match status" value="1"/>
</dbReference>
<dbReference type="Pfam" id="PF01783">
    <property type="entry name" value="Ribosomal_L32p"/>
    <property type="match status" value="1"/>
</dbReference>
<dbReference type="SUPFAM" id="SSF57829">
    <property type="entry name" value="Zn-binding ribosomal proteins"/>
    <property type="match status" value="1"/>
</dbReference>